<gene>
    <name evidence="1" type="primary">rpl14</name>
</gene>
<name>RK14_NEPOL</name>
<protein>
    <recommendedName>
        <fullName evidence="1">Large ribosomal subunit protein uL14c</fullName>
    </recommendedName>
    <alternativeName>
        <fullName evidence="2">50S ribosomal protein L14, chloroplastic</fullName>
    </alternativeName>
</protein>
<dbReference type="EMBL" id="AF137379">
    <property type="protein sequence ID" value="AAD54794.1"/>
    <property type="molecule type" value="Genomic_DNA"/>
</dbReference>
<dbReference type="RefSeq" id="NP_050823.1">
    <property type="nucleotide sequence ID" value="NC_000927.1"/>
</dbReference>
<dbReference type="SMR" id="Q9TL22"/>
<dbReference type="GeneID" id="801997"/>
<dbReference type="GO" id="GO:0009507">
    <property type="term" value="C:chloroplast"/>
    <property type="evidence" value="ECO:0007669"/>
    <property type="project" value="UniProtKB-SubCell"/>
</dbReference>
<dbReference type="GO" id="GO:0022625">
    <property type="term" value="C:cytosolic large ribosomal subunit"/>
    <property type="evidence" value="ECO:0007669"/>
    <property type="project" value="TreeGrafter"/>
</dbReference>
<dbReference type="GO" id="GO:0070180">
    <property type="term" value="F:large ribosomal subunit rRNA binding"/>
    <property type="evidence" value="ECO:0007669"/>
    <property type="project" value="TreeGrafter"/>
</dbReference>
<dbReference type="GO" id="GO:0003735">
    <property type="term" value="F:structural constituent of ribosome"/>
    <property type="evidence" value="ECO:0007669"/>
    <property type="project" value="InterPro"/>
</dbReference>
<dbReference type="GO" id="GO:0006412">
    <property type="term" value="P:translation"/>
    <property type="evidence" value="ECO:0007669"/>
    <property type="project" value="UniProtKB-UniRule"/>
</dbReference>
<dbReference type="CDD" id="cd00337">
    <property type="entry name" value="Ribosomal_uL14"/>
    <property type="match status" value="1"/>
</dbReference>
<dbReference type="FunFam" id="2.40.150.20:FF:000001">
    <property type="entry name" value="50S ribosomal protein L14"/>
    <property type="match status" value="1"/>
</dbReference>
<dbReference type="Gene3D" id="2.40.150.20">
    <property type="entry name" value="Ribosomal protein L14"/>
    <property type="match status" value="1"/>
</dbReference>
<dbReference type="HAMAP" id="MF_01367">
    <property type="entry name" value="Ribosomal_uL14"/>
    <property type="match status" value="1"/>
</dbReference>
<dbReference type="InterPro" id="IPR000218">
    <property type="entry name" value="Ribosomal_uL14"/>
</dbReference>
<dbReference type="InterPro" id="IPR005745">
    <property type="entry name" value="Ribosomal_uL14_bac-type"/>
</dbReference>
<dbReference type="InterPro" id="IPR036853">
    <property type="entry name" value="Ribosomal_uL14_sf"/>
</dbReference>
<dbReference type="NCBIfam" id="TIGR01067">
    <property type="entry name" value="rplN_bact"/>
    <property type="match status" value="1"/>
</dbReference>
<dbReference type="PANTHER" id="PTHR11761">
    <property type="entry name" value="50S/60S RIBOSOMAL PROTEIN L14/L23"/>
    <property type="match status" value="1"/>
</dbReference>
<dbReference type="PANTHER" id="PTHR11761:SF3">
    <property type="entry name" value="LARGE RIBOSOMAL SUBUNIT PROTEIN UL14M"/>
    <property type="match status" value="1"/>
</dbReference>
<dbReference type="Pfam" id="PF00238">
    <property type="entry name" value="Ribosomal_L14"/>
    <property type="match status" value="1"/>
</dbReference>
<dbReference type="SMART" id="SM01374">
    <property type="entry name" value="Ribosomal_L14"/>
    <property type="match status" value="1"/>
</dbReference>
<dbReference type="SUPFAM" id="SSF50193">
    <property type="entry name" value="Ribosomal protein L14"/>
    <property type="match status" value="1"/>
</dbReference>
<reference key="1">
    <citation type="journal article" date="1999" name="Proc. Natl. Acad. Sci. U.S.A.">
        <title>The complete chloroplast DNA sequence of the green alga Nephroselmis olivacea: insights into the architecture of ancestral chloroplast genomes.</title>
        <authorList>
            <person name="Turmel M."/>
            <person name="Otis C."/>
            <person name="Lemieux C."/>
        </authorList>
    </citation>
    <scope>NUCLEOTIDE SEQUENCE [LARGE SCALE GENOMIC DNA]</scope>
    <source>
        <strain>NIES-484 / S-N-5-8</strain>
    </source>
</reference>
<accession>Q9TL22</accession>
<evidence type="ECO:0000255" key="1">
    <source>
        <dbReference type="HAMAP-Rule" id="MF_01367"/>
    </source>
</evidence>
<evidence type="ECO:0000305" key="2"/>
<sequence length="121" mass="13394">MIQPQTILQVADNSGARQLMCIRVLGGRKRYASIGDVIIAVVKDAIPNMPVKKSDVVRAVVVRTSKPVRRDTGMLIRFDDNAAVIVNQEGNPRGTRVFGPVARELRDRQFMKIISLAPEVL</sequence>
<keyword id="KW-0150">Chloroplast</keyword>
<keyword id="KW-0934">Plastid</keyword>
<keyword id="KW-0687">Ribonucleoprotein</keyword>
<keyword id="KW-0689">Ribosomal protein</keyword>
<keyword id="KW-0694">RNA-binding</keyword>
<keyword id="KW-0699">rRNA-binding</keyword>
<organism>
    <name type="scientific">Nephroselmis olivacea</name>
    <name type="common">Green alga</name>
    <dbReference type="NCBI Taxonomy" id="31312"/>
    <lineage>
        <taxon>Eukaryota</taxon>
        <taxon>Viridiplantae</taxon>
        <taxon>Chlorophyta</taxon>
        <taxon>Nephroselmidophyceae</taxon>
        <taxon>Nephroselmidales</taxon>
        <taxon>Nephroselmidaceae</taxon>
        <taxon>Nephroselmis</taxon>
    </lineage>
</organism>
<proteinExistence type="inferred from homology"/>
<feature type="chain" id="PRO_0000128593" description="Large ribosomal subunit protein uL14c">
    <location>
        <begin position="1"/>
        <end position="121"/>
    </location>
</feature>
<geneLocation type="chloroplast"/>
<comment type="function">
    <text evidence="1">Binds to 23S rRNA.</text>
</comment>
<comment type="subunit">
    <text evidence="1">Part of the 50S ribosomal subunit.</text>
</comment>
<comment type="subcellular location">
    <subcellularLocation>
        <location>Plastid</location>
        <location>Chloroplast</location>
    </subcellularLocation>
</comment>
<comment type="similarity">
    <text evidence="1">Belongs to the universal ribosomal protein uL14 family.</text>
</comment>